<protein>
    <recommendedName>
        <fullName>Plasmodial-specific protein LAV1-2</fullName>
    </recommendedName>
</protein>
<organism>
    <name type="scientific">Physarum polycephalum</name>
    <name type="common">Slime mold</name>
    <dbReference type="NCBI Taxonomy" id="5791"/>
    <lineage>
        <taxon>Eukaryota</taxon>
        <taxon>Amoebozoa</taxon>
        <taxon>Evosea</taxon>
        <taxon>Eumycetozoa</taxon>
        <taxon>Myxogastria</taxon>
        <taxon>Myxogastromycetidae</taxon>
        <taxon>Physariida</taxon>
        <taxon>Physaraceae</taxon>
        <taxon>Physarum</taxon>
    </lineage>
</organism>
<proteinExistence type="evidence at protein level"/>
<keyword id="KW-0002">3D-structure</keyword>
<keyword id="KW-0106">Calcium</keyword>
<keyword id="KW-0479">Metal-binding</keyword>
<keyword id="KW-0677">Repeat</keyword>
<name>LAV1_PHYPO</name>
<dbReference type="EMBL" id="X14502">
    <property type="protein sequence ID" value="CAA32655.1"/>
    <property type="molecule type" value="mRNA"/>
</dbReference>
<dbReference type="PIR" id="S06939">
    <property type="entry name" value="S06939"/>
</dbReference>
<dbReference type="PDB" id="1IJ5">
    <property type="method" value="X-ray"/>
    <property type="resolution" value="3.00 A"/>
    <property type="chains" value="A=33-355"/>
</dbReference>
<dbReference type="PDB" id="1IJ6">
    <property type="method" value="X-ray"/>
    <property type="resolution" value="3.10 A"/>
    <property type="chains" value="A=33-355"/>
</dbReference>
<dbReference type="PDBsum" id="1IJ5"/>
<dbReference type="PDBsum" id="1IJ6"/>
<dbReference type="SMR" id="P14725"/>
<dbReference type="EvolutionaryTrace" id="P14725"/>
<dbReference type="GO" id="GO:0005509">
    <property type="term" value="F:calcium ion binding"/>
    <property type="evidence" value="ECO:0007669"/>
    <property type="project" value="InterPro"/>
</dbReference>
<dbReference type="Gene3D" id="1.20.58.90">
    <property type="match status" value="1"/>
</dbReference>
<dbReference type="Gene3D" id="1.10.238.10">
    <property type="entry name" value="EF-hand"/>
    <property type="match status" value="2"/>
</dbReference>
<dbReference type="InterPro" id="IPR011992">
    <property type="entry name" value="EF-hand-dom_pair"/>
</dbReference>
<dbReference type="InterPro" id="IPR018247">
    <property type="entry name" value="EF_Hand_1_Ca_BS"/>
</dbReference>
<dbReference type="InterPro" id="IPR002048">
    <property type="entry name" value="EF_hand_dom"/>
</dbReference>
<dbReference type="PANTHER" id="PTHR45942">
    <property type="entry name" value="PROTEIN PHOSPATASE 3 REGULATORY SUBUNIT B ALPHA ISOFORM TYPE 1"/>
    <property type="match status" value="1"/>
</dbReference>
<dbReference type="Pfam" id="PF13202">
    <property type="entry name" value="EF-hand_5"/>
    <property type="match status" value="2"/>
</dbReference>
<dbReference type="SMART" id="SM00054">
    <property type="entry name" value="EFh"/>
    <property type="match status" value="4"/>
</dbReference>
<dbReference type="SUPFAM" id="SSF47473">
    <property type="entry name" value="EF-hand"/>
    <property type="match status" value="1"/>
</dbReference>
<dbReference type="PROSITE" id="PS00018">
    <property type="entry name" value="EF_HAND_1"/>
    <property type="match status" value="4"/>
</dbReference>
<dbReference type="PROSITE" id="PS50222">
    <property type="entry name" value="EF_HAND_2"/>
    <property type="match status" value="4"/>
</dbReference>
<feature type="chain" id="PRO_0000073742" description="Plasmodial-specific protein LAV1-2">
    <location>
        <begin position="1"/>
        <end position="355"/>
    </location>
</feature>
<feature type="domain" description="EF-hand 1" evidence="1">
    <location>
        <begin position="151"/>
        <end position="186"/>
    </location>
</feature>
<feature type="domain" description="EF-hand 2" evidence="1">
    <location>
        <begin position="217"/>
        <end position="252"/>
    </location>
</feature>
<feature type="domain" description="EF-hand 3" evidence="1">
    <location>
        <begin position="282"/>
        <end position="317"/>
    </location>
</feature>
<feature type="domain" description="EF-hand 4" evidence="1">
    <location>
        <begin position="319"/>
        <end position="354"/>
    </location>
</feature>
<feature type="binding site" evidence="1">
    <location>
        <position position="230"/>
    </location>
    <ligand>
        <name>Ca(2+)</name>
        <dbReference type="ChEBI" id="CHEBI:29108"/>
        <label>1</label>
    </ligand>
</feature>
<feature type="binding site" evidence="1">
    <location>
        <position position="232"/>
    </location>
    <ligand>
        <name>Ca(2+)</name>
        <dbReference type="ChEBI" id="CHEBI:29108"/>
        <label>1</label>
    </ligand>
</feature>
<feature type="binding site" evidence="1">
    <location>
        <position position="234"/>
    </location>
    <ligand>
        <name>Ca(2+)</name>
        <dbReference type="ChEBI" id="CHEBI:29108"/>
        <label>1</label>
    </ligand>
</feature>
<feature type="binding site" evidence="1">
    <location>
        <position position="236"/>
    </location>
    <ligand>
        <name>Ca(2+)</name>
        <dbReference type="ChEBI" id="CHEBI:29108"/>
        <label>1</label>
    </ligand>
</feature>
<feature type="binding site" evidence="1">
    <location>
        <position position="241"/>
    </location>
    <ligand>
        <name>Ca(2+)</name>
        <dbReference type="ChEBI" id="CHEBI:29108"/>
        <label>1</label>
    </ligand>
</feature>
<feature type="binding site" evidence="2">
    <location>
        <position position="265"/>
    </location>
    <ligand>
        <name>Ca(2+)</name>
        <dbReference type="ChEBI" id="CHEBI:29108"/>
        <label>2</label>
    </ligand>
</feature>
<feature type="binding site" evidence="2">
    <location>
        <position position="267"/>
    </location>
    <ligand>
        <name>Ca(2+)</name>
        <dbReference type="ChEBI" id="CHEBI:29108"/>
        <label>2</label>
    </ligand>
</feature>
<feature type="binding site" evidence="2">
    <location>
        <position position="269"/>
    </location>
    <ligand>
        <name>Ca(2+)</name>
        <dbReference type="ChEBI" id="CHEBI:29108"/>
        <label>2</label>
    </ligand>
</feature>
<feature type="binding site" evidence="2">
    <location>
        <position position="271"/>
    </location>
    <ligand>
        <name>Ca(2+)</name>
        <dbReference type="ChEBI" id="CHEBI:29108"/>
        <label>2</label>
    </ligand>
</feature>
<feature type="binding site" evidence="2">
    <location>
        <position position="276"/>
    </location>
    <ligand>
        <name>Ca(2+)</name>
        <dbReference type="ChEBI" id="CHEBI:29108"/>
        <label>2</label>
    </ligand>
</feature>
<feature type="binding site" evidence="1">
    <location>
        <position position="295"/>
    </location>
    <ligand>
        <name>Ca(2+)</name>
        <dbReference type="ChEBI" id="CHEBI:29108"/>
        <label>3</label>
    </ligand>
</feature>
<feature type="binding site" evidence="1">
    <location>
        <position position="297"/>
    </location>
    <ligand>
        <name>Ca(2+)</name>
        <dbReference type="ChEBI" id="CHEBI:29108"/>
        <label>3</label>
    </ligand>
</feature>
<feature type="binding site" evidence="1">
    <location>
        <position position="299"/>
    </location>
    <ligand>
        <name>Ca(2+)</name>
        <dbReference type="ChEBI" id="CHEBI:29108"/>
        <label>3</label>
    </ligand>
</feature>
<feature type="binding site" evidence="1">
    <location>
        <position position="301"/>
    </location>
    <ligand>
        <name>Ca(2+)</name>
        <dbReference type="ChEBI" id="CHEBI:29108"/>
        <label>3</label>
    </ligand>
</feature>
<feature type="binding site" evidence="1">
    <location>
        <position position="306"/>
    </location>
    <ligand>
        <name>Ca(2+)</name>
        <dbReference type="ChEBI" id="CHEBI:29108"/>
        <label>3</label>
    </ligand>
</feature>
<feature type="binding site" evidence="1">
    <location>
        <position position="332"/>
    </location>
    <ligand>
        <name>Ca(2+)</name>
        <dbReference type="ChEBI" id="CHEBI:29108"/>
        <label>4</label>
    </ligand>
</feature>
<feature type="binding site" evidence="1">
    <location>
        <position position="334"/>
    </location>
    <ligand>
        <name>Ca(2+)</name>
        <dbReference type="ChEBI" id="CHEBI:29108"/>
        <label>4</label>
    </ligand>
</feature>
<feature type="binding site" evidence="1">
    <location>
        <position position="336"/>
    </location>
    <ligand>
        <name>Ca(2+)</name>
        <dbReference type="ChEBI" id="CHEBI:29108"/>
        <label>4</label>
    </ligand>
</feature>
<feature type="binding site" evidence="1">
    <location>
        <position position="338"/>
    </location>
    <ligand>
        <name>Ca(2+)</name>
        <dbReference type="ChEBI" id="CHEBI:29108"/>
        <label>4</label>
    </ligand>
</feature>
<feature type="binding site" evidence="1">
    <location>
        <position position="343"/>
    </location>
    <ligand>
        <name>Ca(2+)</name>
        <dbReference type="ChEBI" id="CHEBI:29108"/>
        <label>4</label>
    </ligand>
</feature>
<feature type="helix" evidence="3">
    <location>
        <begin position="37"/>
        <end position="60"/>
    </location>
</feature>
<feature type="helix" evidence="3">
    <location>
        <begin position="74"/>
        <end position="112"/>
    </location>
</feature>
<feature type="helix" evidence="3">
    <location>
        <begin position="117"/>
        <end position="130"/>
    </location>
</feature>
<feature type="helix" evidence="3">
    <location>
        <begin position="150"/>
        <end position="160"/>
    </location>
</feature>
<feature type="strand" evidence="3">
    <location>
        <begin position="162"/>
        <end position="165"/>
    </location>
</feature>
<feature type="helix" evidence="3">
    <location>
        <begin position="173"/>
        <end position="184"/>
    </location>
</feature>
<feature type="helix" evidence="3">
    <location>
        <begin position="191"/>
        <end position="201"/>
    </location>
</feature>
<feature type="helix" evidence="4">
    <location>
        <begin position="203"/>
        <end position="205"/>
    </location>
</feature>
<feature type="helix" evidence="3">
    <location>
        <begin position="207"/>
        <end position="212"/>
    </location>
</feature>
<feature type="helix" evidence="3">
    <location>
        <begin position="216"/>
        <end position="220"/>
    </location>
</feature>
<feature type="helix" evidence="3">
    <location>
        <begin position="226"/>
        <end position="229"/>
    </location>
</feature>
<feature type="strand" evidence="3">
    <location>
        <begin position="235"/>
        <end position="237"/>
    </location>
</feature>
<feature type="helix" evidence="3">
    <location>
        <begin position="239"/>
        <end position="248"/>
    </location>
</feature>
<feature type="helix" evidence="3">
    <location>
        <begin position="254"/>
        <end position="264"/>
    </location>
</feature>
<feature type="strand" evidence="4">
    <location>
        <begin position="270"/>
        <end position="273"/>
    </location>
</feature>
<feature type="helix" evidence="3">
    <location>
        <begin position="274"/>
        <end position="293"/>
    </location>
</feature>
<feature type="strand" evidence="3">
    <location>
        <begin position="296"/>
        <end position="298"/>
    </location>
</feature>
<feature type="strand" evidence="3">
    <location>
        <begin position="300"/>
        <end position="303"/>
    </location>
</feature>
<feature type="helix" evidence="3">
    <location>
        <begin position="304"/>
        <end position="313"/>
    </location>
</feature>
<feature type="helix" evidence="3">
    <location>
        <begin position="318"/>
        <end position="320"/>
    </location>
</feature>
<feature type="helix" evidence="3">
    <location>
        <begin position="324"/>
        <end position="331"/>
    </location>
</feature>
<feature type="turn" evidence="3">
    <location>
        <begin position="332"/>
        <end position="334"/>
    </location>
</feature>
<feature type="strand" evidence="3">
    <location>
        <begin position="337"/>
        <end position="339"/>
    </location>
</feature>
<feature type="helix" evidence="3">
    <location>
        <begin position="341"/>
        <end position="351"/>
    </location>
</feature>
<reference key="1">
    <citation type="journal article" date="1989" name="Nucleic Acids Res.">
        <title>The nucleotide sequence of a developmentally regulated cDNA from Physarum polycephalum.</title>
        <authorList>
            <person name="Laroche A."/>
            <person name="Lemieux G."/>
            <person name="Pallotta D."/>
        </authorList>
    </citation>
    <scope>NUCLEOTIDE SEQUENCE [MRNA]</scope>
    <source>
        <strain>M3C</strain>
    </source>
</reference>
<sequence>MSYQEAWNPVDSSLDEIISIAASLKSKTGAVKEIFSQELTQREANVKKVHENLEELQKKLDHTSFAHKEDRDRLEAQIAQKEQEQKAKLAEYDQKVQNEFDARERAEREREAARGDAAAEKQRLASLLKDLEDDASGYNRLRPSKPMLSEEDTNILRQLFLSSAVSGSGKFSFQDLKQVLAKYADTIPEGPLKKLFVMVENDTKGRMSYITLVAVANDLAALVADFRKIDTNSNGTLSRKEFREHFVRLGFDKKSVQDALFRYADEDESDDVGFSEYVHLGLCLLVLRILYAFADFDKSGQLSKEEVQKVLEDAHIPESARKKFEHQFSVVDVDDSKSLSYQEFVMLVLLMFHDD</sequence>
<comment type="miscellaneous">
    <text>This protein has four EF-hand homolog domains inferred to bind calcium.</text>
</comment>
<evidence type="ECO:0000255" key="1">
    <source>
        <dbReference type="PROSITE-ProRule" id="PRU00448"/>
    </source>
</evidence>
<evidence type="ECO:0000305" key="2"/>
<evidence type="ECO:0007829" key="3">
    <source>
        <dbReference type="PDB" id="1IJ5"/>
    </source>
</evidence>
<evidence type="ECO:0007829" key="4">
    <source>
        <dbReference type="PDB" id="1IJ6"/>
    </source>
</evidence>
<accession>P14725</accession>